<feature type="signal peptide" evidence="2">
    <location>
        <begin position="1"/>
        <end position="23"/>
    </location>
</feature>
<feature type="chain" id="PRO_0000031012" description="Multidrug resistance outer membrane protein MdtP">
    <location>
        <begin position="24"/>
        <end position="488"/>
    </location>
</feature>
<feature type="lipid moiety-binding region" description="N-palmitoyl cysteine" evidence="2">
    <location>
        <position position="24"/>
    </location>
</feature>
<feature type="lipid moiety-binding region" description="S-diacylglycerol cysteine" evidence="2">
    <location>
        <position position="24"/>
    </location>
</feature>
<organism>
    <name type="scientific">Shigella flexneri</name>
    <dbReference type="NCBI Taxonomy" id="623"/>
    <lineage>
        <taxon>Bacteria</taxon>
        <taxon>Pseudomonadati</taxon>
        <taxon>Pseudomonadota</taxon>
        <taxon>Gammaproteobacteria</taxon>
        <taxon>Enterobacterales</taxon>
        <taxon>Enterobacteriaceae</taxon>
        <taxon>Shigella</taxon>
    </lineage>
</organism>
<comment type="function">
    <text evidence="1">Could be involved in resistance to puromycin, acriflavine and tetraphenylarsonium chloride.</text>
</comment>
<comment type="subunit">
    <text evidence="1">Could be part of a tripartite efflux system composed of MdtN, MdtO and MdtP.</text>
</comment>
<comment type="subcellular location">
    <subcellularLocation>
        <location evidence="3">Cell outer membrane</location>
        <topology evidence="2">Lipid-anchor</topology>
    </subcellularLocation>
</comment>
<comment type="similarity">
    <text evidence="3">Belongs to the outer membrane factor (OMF) (TC 1.B.17) family.</text>
</comment>
<reference key="1">
    <citation type="journal article" date="2002" name="Nucleic Acids Res.">
        <title>Genome sequence of Shigella flexneri 2a: insights into pathogenicity through comparison with genomes of Escherichia coli K12 and O157.</title>
        <authorList>
            <person name="Jin Q."/>
            <person name="Yuan Z."/>
            <person name="Xu J."/>
            <person name="Wang Y."/>
            <person name="Shen Y."/>
            <person name="Lu W."/>
            <person name="Wang J."/>
            <person name="Liu H."/>
            <person name="Yang J."/>
            <person name="Yang F."/>
            <person name="Zhang X."/>
            <person name="Zhang J."/>
            <person name="Yang G."/>
            <person name="Wu H."/>
            <person name="Qu D."/>
            <person name="Dong J."/>
            <person name="Sun L."/>
            <person name="Xue Y."/>
            <person name="Zhao A."/>
            <person name="Gao Y."/>
            <person name="Zhu J."/>
            <person name="Kan B."/>
            <person name="Ding K."/>
            <person name="Chen S."/>
            <person name="Cheng H."/>
            <person name="Yao Z."/>
            <person name="He B."/>
            <person name="Chen R."/>
            <person name="Ma D."/>
            <person name="Qiang B."/>
            <person name="Wen Y."/>
            <person name="Hou Y."/>
            <person name="Yu J."/>
        </authorList>
    </citation>
    <scope>NUCLEOTIDE SEQUENCE [LARGE SCALE GENOMIC DNA]</scope>
    <source>
        <strain>301 / Serotype 2a</strain>
    </source>
</reference>
<reference key="2">
    <citation type="journal article" date="2003" name="Infect. Immun.">
        <title>Complete genome sequence and comparative genomics of Shigella flexneri serotype 2a strain 2457T.</title>
        <authorList>
            <person name="Wei J."/>
            <person name="Goldberg M.B."/>
            <person name="Burland V."/>
            <person name="Venkatesan M.M."/>
            <person name="Deng W."/>
            <person name="Fournier G."/>
            <person name="Mayhew G.F."/>
            <person name="Plunkett G. III"/>
            <person name="Rose D.J."/>
            <person name="Darling A."/>
            <person name="Mau B."/>
            <person name="Perna N.T."/>
            <person name="Payne S.M."/>
            <person name="Runyen-Janecky L.J."/>
            <person name="Zhou S."/>
            <person name="Schwartz D.C."/>
            <person name="Blattner F.R."/>
        </authorList>
    </citation>
    <scope>NUCLEOTIDE SEQUENCE [LARGE SCALE GENOMIC DNA]</scope>
    <source>
        <strain>ATCC 700930 / 2457T / Serotype 2a</strain>
    </source>
</reference>
<evidence type="ECO:0000250" key="1"/>
<evidence type="ECO:0000255" key="2">
    <source>
        <dbReference type="PROSITE-ProRule" id="PRU00303"/>
    </source>
</evidence>
<evidence type="ECO:0000305" key="3"/>
<accession>Q83P87</accession>
<accession>Q7BZK5</accession>
<name>MDTP_SHIFL</name>
<protein>
    <recommendedName>
        <fullName>Multidrug resistance outer membrane protein MdtP</fullName>
    </recommendedName>
</protein>
<sequence>MINRQLSRLLLCSILGSTTLISGCALVRKDSAPHQQLKPEQIKLADDIHLASSGWPQAQWWKQLNDPQLDALIQRTLSGSHTLAEAKLREEKAQSQADLLDAGSQLQVAALGMLNRQRVSANGFLSPYAMDAPALGMDGPYYTEATVGLFAGLDLDLWGVHRSAVAAAIGAHNAALAETAAVELSLTTGVAQLYYSMQASYQMLDLLEQTRDVIDYAVKAHQSKVAHGLEAQVPFHGARAQILAVDKQIAAVKGQITETRESLRALIGAGASDMPEIKPVALPRVQTGIPATLSYELLARRPDLQAMRWYVQASLDQVDSARALFYPSFDIKAFFGLDAIHLDTLFKKTSRQFNFIPGLKLPLFDGGRLNANLEGTRAASNMMIERYNQSVLNAVRDVAVNGTRLQTLNDEREMQAEHVEATRFTQRAAEAAYQRGLTSRLQATEARLPVLAEEMSLLMLDSRRVIQSIQLMKSLGGGYQAAPVVEKK</sequence>
<proteinExistence type="inferred from homology"/>
<gene>
    <name type="primary">mdtP</name>
    <name type="ordered locus">SF4140</name>
    <name type="ordered locus">S3607</name>
</gene>
<keyword id="KW-0046">Antibiotic resistance</keyword>
<keyword id="KW-0998">Cell outer membrane</keyword>
<keyword id="KW-0449">Lipoprotein</keyword>
<keyword id="KW-0472">Membrane</keyword>
<keyword id="KW-0564">Palmitate</keyword>
<keyword id="KW-1185">Reference proteome</keyword>
<keyword id="KW-0732">Signal</keyword>
<keyword id="KW-0812">Transmembrane</keyword>
<keyword id="KW-1134">Transmembrane beta strand</keyword>
<dbReference type="EMBL" id="AE005674">
    <property type="protein sequence ID" value="AAN45562.1"/>
    <property type="molecule type" value="Genomic_DNA"/>
</dbReference>
<dbReference type="EMBL" id="AE014073">
    <property type="protein sequence ID" value="AAP18650.1"/>
    <property type="molecule type" value="Genomic_DNA"/>
</dbReference>
<dbReference type="RefSeq" id="WP_000610572.1">
    <property type="nucleotide sequence ID" value="NZ_WPGW01000075.1"/>
</dbReference>
<dbReference type="SMR" id="Q83P87"/>
<dbReference type="STRING" id="198214.SF4140"/>
<dbReference type="PaxDb" id="198214-SF4140"/>
<dbReference type="KEGG" id="sfl:SF4140"/>
<dbReference type="KEGG" id="sfx:S3607"/>
<dbReference type="PATRIC" id="fig|198214.7.peg.4887"/>
<dbReference type="HOGENOM" id="CLU_012817_6_3_6"/>
<dbReference type="Proteomes" id="UP000001006">
    <property type="component" value="Chromosome"/>
</dbReference>
<dbReference type="Proteomes" id="UP000002673">
    <property type="component" value="Chromosome"/>
</dbReference>
<dbReference type="GO" id="GO:0009279">
    <property type="term" value="C:cell outer membrane"/>
    <property type="evidence" value="ECO:0007669"/>
    <property type="project" value="UniProtKB-SubCell"/>
</dbReference>
<dbReference type="GO" id="GO:0015562">
    <property type="term" value="F:efflux transmembrane transporter activity"/>
    <property type="evidence" value="ECO:0007669"/>
    <property type="project" value="InterPro"/>
</dbReference>
<dbReference type="GO" id="GO:0046677">
    <property type="term" value="P:response to antibiotic"/>
    <property type="evidence" value="ECO:0007669"/>
    <property type="project" value="UniProtKB-KW"/>
</dbReference>
<dbReference type="Gene3D" id="1.20.1600.10">
    <property type="entry name" value="Outer membrane efflux proteins (OEP)"/>
    <property type="match status" value="1"/>
</dbReference>
<dbReference type="Gene3D" id="2.20.200.10">
    <property type="entry name" value="Outer membrane efflux proteins (OEP)"/>
    <property type="match status" value="1"/>
</dbReference>
<dbReference type="InterPro" id="IPR050737">
    <property type="entry name" value="OMF"/>
</dbReference>
<dbReference type="InterPro" id="IPR003423">
    <property type="entry name" value="OMP_efflux"/>
</dbReference>
<dbReference type="InterPro" id="IPR010131">
    <property type="entry name" value="RND_efflux_OM_lipoprot_NodT"/>
</dbReference>
<dbReference type="NCBIfam" id="TIGR01845">
    <property type="entry name" value="outer_NodT"/>
    <property type="match status" value="1"/>
</dbReference>
<dbReference type="NCBIfam" id="NF007390">
    <property type="entry name" value="PRK09915.1"/>
    <property type="match status" value="1"/>
</dbReference>
<dbReference type="PANTHER" id="PTHR30203:SF20">
    <property type="entry name" value="MULTIDRUG RESISTANCE OUTER MEMBRANE PROTEIN MDTP-RELATED"/>
    <property type="match status" value="1"/>
</dbReference>
<dbReference type="PANTHER" id="PTHR30203">
    <property type="entry name" value="OUTER MEMBRANE CATION EFFLUX PROTEIN"/>
    <property type="match status" value="1"/>
</dbReference>
<dbReference type="Pfam" id="PF02321">
    <property type="entry name" value="OEP"/>
    <property type="match status" value="2"/>
</dbReference>
<dbReference type="SUPFAM" id="SSF56954">
    <property type="entry name" value="Outer membrane efflux proteins (OEP)"/>
    <property type="match status" value="1"/>
</dbReference>
<dbReference type="PROSITE" id="PS51257">
    <property type="entry name" value="PROKAR_LIPOPROTEIN"/>
    <property type="match status" value="1"/>
</dbReference>